<organism>
    <name type="scientific">Cereibacter sphaeroides (strain KD131 / KCTC 12085)</name>
    <name type="common">Rhodobacter sphaeroides</name>
    <dbReference type="NCBI Taxonomy" id="557760"/>
    <lineage>
        <taxon>Bacteria</taxon>
        <taxon>Pseudomonadati</taxon>
        <taxon>Pseudomonadota</taxon>
        <taxon>Alphaproteobacteria</taxon>
        <taxon>Rhodobacterales</taxon>
        <taxon>Paracoccaceae</taxon>
        <taxon>Cereibacter</taxon>
    </lineage>
</organism>
<dbReference type="EMBL" id="CP001151">
    <property type="protein sequence ID" value="ACM03620.1"/>
    <property type="molecule type" value="Genomic_DNA"/>
</dbReference>
<dbReference type="RefSeq" id="WP_002724542.1">
    <property type="nucleotide sequence ID" value="NC_011958.1"/>
</dbReference>
<dbReference type="SMR" id="B9KU92"/>
<dbReference type="GeneID" id="67449067"/>
<dbReference type="KEGG" id="rsk:RSKD131_3760"/>
<dbReference type="HOGENOM" id="CLU_105066_2_0_5"/>
<dbReference type="GO" id="GO:0005694">
    <property type="term" value="C:chromosome"/>
    <property type="evidence" value="ECO:0007669"/>
    <property type="project" value="InterPro"/>
</dbReference>
<dbReference type="GO" id="GO:0005829">
    <property type="term" value="C:cytosol"/>
    <property type="evidence" value="ECO:0007669"/>
    <property type="project" value="TreeGrafter"/>
</dbReference>
<dbReference type="GO" id="GO:0003677">
    <property type="term" value="F:DNA binding"/>
    <property type="evidence" value="ECO:0007669"/>
    <property type="project" value="UniProtKB-UniRule"/>
</dbReference>
<dbReference type="GO" id="GO:0030527">
    <property type="term" value="F:structural constituent of chromatin"/>
    <property type="evidence" value="ECO:0007669"/>
    <property type="project" value="InterPro"/>
</dbReference>
<dbReference type="GO" id="GO:0006310">
    <property type="term" value="P:DNA recombination"/>
    <property type="evidence" value="ECO:0007669"/>
    <property type="project" value="UniProtKB-UniRule"/>
</dbReference>
<dbReference type="GO" id="GO:0006355">
    <property type="term" value="P:regulation of DNA-templated transcription"/>
    <property type="evidence" value="ECO:0007669"/>
    <property type="project" value="UniProtKB-UniRule"/>
</dbReference>
<dbReference type="GO" id="GO:0006417">
    <property type="term" value="P:regulation of translation"/>
    <property type="evidence" value="ECO:0007669"/>
    <property type="project" value="UniProtKB-UniRule"/>
</dbReference>
<dbReference type="CDD" id="cd13836">
    <property type="entry name" value="IHF_B"/>
    <property type="match status" value="1"/>
</dbReference>
<dbReference type="Gene3D" id="4.10.520.10">
    <property type="entry name" value="IHF-like DNA-binding proteins"/>
    <property type="match status" value="1"/>
</dbReference>
<dbReference type="HAMAP" id="MF_00381">
    <property type="entry name" value="IHF_beta"/>
    <property type="match status" value="1"/>
</dbReference>
<dbReference type="InterPro" id="IPR000119">
    <property type="entry name" value="Hist_DNA-bd"/>
</dbReference>
<dbReference type="InterPro" id="IPR020816">
    <property type="entry name" value="Histone-like_DNA-bd_CS"/>
</dbReference>
<dbReference type="InterPro" id="IPR010992">
    <property type="entry name" value="IHF-like_DNA-bd_dom_sf"/>
</dbReference>
<dbReference type="InterPro" id="IPR005685">
    <property type="entry name" value="IHF_beta"/>
</dbReference>
<dbReference type="NCBIfam" id="TIGR00988">
    <property type="entry name" value="hip"/>
    <property type="match status" value="1"/>
</dbReference>
<dbReference type="NCBIfam" id="NF001222">
    <property type="entry name" value="PRK00199.1"/>
    <property type="match status" value="1"/>
</dbReference>
<dbReference type="PANTHER" id="PTHR33175">
    <property type="entry name" value="DNA-BINDING PROTEIN HU"/>
    <property type="match status" value="1"/>
</dbReference>
<dbReference type="PANTHER" id="PTHR33175:SF5">
    <property type="entry name" value="INTEGRATION HOST FACTOR SUBUNIT BETA"/>
    <property type="match status" value="1"/>
</dbReference>
<dbReference type="Pfam" id="PF00216">
    <property type="entry name" value="Bac_DNA_binding"/>
    <property type="match status" value="1"/>
</dbReference>
<dbReference type="PRINTS" id="PR01727">
    <property type="entry name" value="DNABINDINGHU"/>
</dbReference>
<dbReference type="SMART" id="SM00411">
    <property type="entry name" value="BHL"/>
    <property type="match status" value="1"/>
</dbReference>
<dbReference type="SUPFAM" id="SSF47729">
    <property type="entry name" value="IHF-like DNA-binding proteins"/>
    <property type="match status" value="1"/>
</dbReference>
<dbReference type="PROSITE" id="PS00045">
    <property type="entry name" value="HISTONE_LIKE"/>
    <property type="match status" value="1"/>
</dbReference>
<sequence length="93" mass="10684">MIRSELIQKIADENPHLTQRHVERIVNTVFEEIIEALARGDRVELRGFGAFSVKARDARVGRNPRTGEAVEVEDKKVPFFKTGKLLRDRLNTK</sequence>
<comment type="function">
    <text evidence="1">This protein is one of the two subunits of integration host factor, a specific DNA-binding protein that functions in genetic recombination as well as in transcriptional and translational control.</text>
</comment>
<comment type="subunit">
    <text evidence="1">Heterodimer of an alpha and a beta chain.</text>
</comment>
<comment type="similarity">
    <text evidence="1">Belongs to the bacterial histone-like protein family.</text>
</comment>
<reference key="1">
    <citation type="journal article" date="2009" name="J. Bacteriol.">
        <title>Complete genome sequence of Rhodobacter sphaeroides KD131.</title>
        <authorList>
            <person name="Lim S.-K."/>
            <person name="Kim S.J."/>
            <person name="Cha S.H."/>
            <person name="Oh Y.-K."/>
            <person name="Rhee H.-J."/>
            <person name="Kim M.-S."/>
            <person name="Lee J.K."/>
        </authorList>
    </citation>
    <scope>NUCLEOTIDE SEQUENCE [LARGE SCALE GENOMIC DNA]</scope>
    <source>
        <strain>KD131 / KCTC 12085</strain>
    </source>
</reference>
<proteinExistence type="inferred from homology"/>
<keyword id="KW-0233">DNA recombination</keyword>
<keyword id="KW-0238">DNA-binding</keyword>
<keyword id="KW-0804">Transcription</keyword>
<keyword id="KW-0805">Transcription regulation</keyword>
<keyword id="KW-0810">Translation regulation</keyword>
<name>IHFB_CERSK</name>
<feature type="chain" id="PRO_1000190446" description="Integration host factor subunit beta">
    <location>
        <begin position="1"/>
        <end position="93"/>
    </location>
</feature>
<protein>
    <recommendedName>
        <fullName evidence="1">Integration host factor subunit beta</fullName>
        <shortName evidence="1">IHF-beta</shortName>
    </recommendedName>
</protein>
<accession>B9KU92</accession>
<gene>
    <name evidence="1" type="primary">ihfB</name>
    <name evidence="1" type="synonym">himD</name>
    <name type="ordered locus">RSKD131_3760</name>
</gene>
<evidence type="ECO:0000255" key="1">
    <source>
        <dbReference type="HAMAP-Rule" id="MF_00381"/>
    </source>
</evidence>